<dbReference type="EMBL" id="AC009323">
    <property type="protein sequence ID" value="AAG09095.1"/>
    <property type="molecule type" value="Genomic_DNA"/>
</dbReference>
<dbReference type="EMBL" id="CP002684">
    <property type="protein sequence ID" value="AEE33423.1"/>
    <property type="molecule type" value="Genomic_DNA"/>
</dbReference>
<dbReference type="PIR" id="G96608">
    <property type="entry name" value="G96608"/>
</dbReference>
<dbReference type="RefSeq" id="NP_176062.1">
    <property type="nucleotide sequence ID" value="NM_104546.2"/>
</dbReference>
<dbReference type="SMR" id="Q9FXB9"/>
<dbReference type="FunCoup" id="Q9FXB9">
    <property type="interactions" value="446"/>
</dbReference>
<dbReference type="STRING" id="3702.Q9FXB9"/>
<dbReference type="iPTMnet" id="Q9FXB9"/>
<dbReference type="PaxDb" id="3702-AT1G56690.1"/>
<dbReference type="ProteomicsDB" id="226468"/>
<dbReference type="EnsemblPlants" id="AT1G56690.1">
    <property type="protein sequence ID" value="AT1G56690.1"/>
    <property type="gene ID" value="AT1G56690"/>
</dbReference>
<dbReference type="GeneID" id="842125"/>
<dbReference type="Gramene" id="AT1G56690.1">
    <property type="protein sequence ID" value="AT1G56690.1"/>
    <property type="gene ID" value="AT1G56690"/>
</dbReference>
<dbReference type="KEGG" id="ath:AT1G56690"/>
<dbReference type="Araport" id="AT1G56690"/>
<dbReference type="TAIR" id="AT1G56690"/>
<dbReference type="eggNOG" id="KOG4197">
    <property type="taxonomic scope" value="Eukaryota"/>
</dbReference>
<dbReference type="HOGENOM" id="CLU_002706_15_0_1"/>
<dbReference type="InParanoid" id="Q9FXB9"/>
<dbReference type="OMA" id="GIFHDMR"/>
<dbReference type="PhylomeDB" id="Q9FXB9"/>
<dbReference type="PRO" id="PR:Q9FXB9"/>
<dbReference type="Proteomes" id="UP000006548">
    <property type="component" value="Chromosome 1"/>
</dbReference>
<dbReference type="ExpressionAtlas" id="Q9FXB9">
    <property type="expression patterns" value="baseline and differential"/>
</dbReference>
<dbReference type="GO" id="GO:0005739">
    <property type="term" value="C:mitochondrion"/>
    <property type="evidence" value="ECO:0007669"/>
    <property type="project" value="UniProtKB-SubCell"/>
</dbReference>
<dbReference type="GO" id="GO:0003723">
    <property type="term" value="F:RNA binding"/>
    <property type="evidence" value="ECO:0007669"/>
    <property type="project" value="InterPro"/>
</dbReference>
<dbReference type="GO" id="GO:0008270">
    <property type="term" value="F:zinc ion binding"/>
    <property type="evidence" value="ECO:0007669"/>
    <property type="project" value="InterPro"/>
</dbReference>
<dbReference type="GO" id="GO:0009451">
    <property type="term" value="P:RNA modification"/>
    <property type="evidence" value="ECO:0007669"/>
    <property type="project" value="InterPro"/>
</dbReference>
<dbReference type="FunFam" id="1.25.40.10:FF:001506">
    <property type="entry name" value="Os03g0317100 protein"/>
    <property type="match status" value="1"/>
</dbReference>
<dbReference type="FunFam" id="1.25.40.10:FF:000125">
    <property type="entry name" value="Pentatricopeptide repeat-containing protein"/>
    <property type="match status" value="1"/>
</dbReference>
<dbReference type="FunFam" id="1.25.40.10:FF:000280">
    <property type="entry name" value="Pentatricopeptide repeat-containing protein"/>
    <property type="match status" value="1"/>
</dbReference>
<dbReference type="Gene3D" id="1.25.40.10">
    <property type="entry name" value="Tetratricopeptide repeat domain"/>
    <property type="match status" value="5"/>
</dbReference>
<dbReference type="InterPro" id="IPR032867">
    <property type="entry name" value="DYW_dom"/>
</dbReference>
<dbReference type="InterPro" id="IPR046848">
    <property type="entry name" value="E_motif"/>
</dbReference>
<dbReference type="InterPro" id="IPR002885">
    <property type="entry name" value="Pentatricopeptide_rpt"/>
</dbReference>
<dbReference type="InterPro" id="IPR046960">
    <property type="entry name" value="PPR_At4g14850-like_plant"/>
</dbReference>
<dbReference type="InterPro" id="IPR011990">
    <property type="entry name" value="TPR-like_helical_dom_sf"/>
</dbReference>
<dbReference type="NCBIfam" id="TIGR00756">
    <property type="entry name" value="PPR"/>
    <property type="match status" value="9"/>
</dbReference>
<dbReference type="PANTHER" id="PTHR47926:SF478">
    <property type="entry name" value="PENTACOTRIPEPTIDE-REPEAT REGION OF PRORP DOMAIN-CONTAINING PROTEIN"/>
    <property type="match status" value="1"/>
</dbReference>
<dbReference type="PANTHER" id="PTHR47926">
    <property type="entry name" value="PENTATRICOPEPTIDE REPEAT-CONTAINING PROTEIN"/>
    <property type="match status" value="1"/>
</dbReference>
<dbReference type="Pfam" id="PF14432">
    <property type="entry name" value="DYW_deaminase"/>
    <property type="match status" value="1"/>
</dbReference>
<dbReference type="Pfam" id="PF20431">
    <property type="entry name" value="E_motif"/>
    <property type="match status" value="1"/>
</dbReference>
<dbReference type="Pfam" id="PF01535">
    <property type="entry name" value="PPR"/>
    <property type="match status" value="10"/>
</dbReference>
<dbReference type="Pfam" id="PF13041">
    <property type="entry name" value="PPR_2"/>
    <property type="match status" value="1"/>
</dbReference>
<dbReference type="SUPFAM" id="SSF52954">
    <property type="entry name" value="Class II aaRS ABD-related"/>
    <property type="match status" value="1"/>
</dbReference>
<dbReference type="PROSITE" id="PS51375">
    <property type="entry name" value="PPR"/>
    <property type="match status" value="15"/>
</dbReference>
<keyword id="KW-0496">Mitochondrion</keyword>
<keyword id="KW-1185">Reference proteome</keyword>
<keyword id="KW-0677">Repeat</keyword>
<keyword id="KW-0809">Transit peptide</keyword>
<name>PPR84_ARATH</name>
<feature type="transit peptide" description="Mitochondrion" evidence="1">
    <location>
        <begin position="1"/>
        <end position="12"/>
    </location>
</feature>
<feature type="chain" id="PRO_0000342825" description="Pentatricopeptide repeat-containing protein At1g56690, mitochondrial">
    <location>
        <begin position="13"/>
        <end position="704"/>
    </location>
</feature>
<feature type="repeat" description="PPR 1">
    <location>
        <begin position="16"/>
        <end position="46"/>
    </location>
</feature>
<feature type="repeat" description="PPR 2">
    <location>
        <begin position="47"/>
        <end position="81"/>
    </location>
</feature>
<feature type="repeat" description="PPR 3">
    <location>
        <begin position="82"/>
        <end position="108"/>
    </location>
</feature>
<feature type="repeat" description="PPR 4">
    <location>
        <begin position="109"/>
        <end position="143"/>
    </location>
</feature>
<feature type="repeat" description="PPR 5">
    <location>
        <begin position="144"/>
        <end position="170"/>
    </location>
</feature>
<feature type="repeat" description="PPR 6">
    <location>
        <begin position="171"/>
        <end position="205"/>
    </location>
</feature>
<feature type="repeat" description="PPR 7">
    <location>
        <begin position="206"/>
        <end position="232"/>
    </location>
</feature>
<feature type="repeat" description="PPR 8">
    <location>
        <begin position="233"/>
        <end position="267"/>
    </location>
</feature>
<feature type="repeat" description="PPR 9">
    <location>
        <begin position="268"/>
        <end position="294"/>
    </location>
</feature>
<feature type="repeat" description="PPR 10">
    <location>
        <begin position="295"/>
        <end position="329"/>
    </location>
</feature>
<feature type="repeat" description="PPR 11">
    <location>
        <begin position="330"/>
        <end position="364"/>
    </location>
</feature>
<feature type="repeat" description="PPR 12">
    <location>
        <begin position="365"/>
        <end position="395"/>
    </location>
</feature>
<feature type="repeat" description="PPR 13">
    <location>
        <begin position="396"/>
        <end position="430"/>
    </location>
</feature>
<feature type="repeat" description="PPR 14">
    <location>
        <begin position="431"/>
        <end position="465"/>
    </location>
</feature>
<feature type="repeat" description="PPR 15">
    <location>
        <begin position="467"/>
        <end position="497"/>
    </location>
</feature>
<feature type="region of interest" description="Type E motif">
    <location>
        <begin position="502"/>
        <end position="577"/>
    </location>
</feature>
<feature type="region of interest" description="Type E(+) motif">
    <location>
        <begin position="578"/>
        <end position="609"/>
    </location>
</feature>
<feature type="region of interest" description="Type DYW motif">
    <location>
        <begin position="610"/>
        <end position="704"/>
    </location>
</feature>
<evidence type="ECO:0000269" key="1">
    <source>
    </source>
</evidence>
<evidence type="ECO:0000305" key="2"/>
<evidence type="ECO:0000305" key="3">
    <source>
    </source>
</evidence>
<comment type="subcellular location">
    <subcellularLocation>
        <location evidence="3">Mitochondrion</location>
    </subcellularLocation>
</comment>
<comment type="similarity">
    <text evidence="2">Belongs to the PPR family. PCMP-H subfamily.</text>
</comment>
<comment type="online information" name="Pentatricopeptide repeat proteins">
    <link uri="https://ppr.plantenergy.uwa.edu.au"/>
</comment>
<gene>
    <name type="primary">PCMP-H69</name>
    <name type="ordered locus">At1g56690</name>
    <name type="ORF">F25P12.87</name>
</gene>
<proteinExistence type="evidence at transcript level"/>
<reference key="1">
    <citation type="journal article" date="2000" name="Nature">
        <title>Sequence and analysis of chromosome 1 of the plant Arabidopsis thaliana.</title>
        <authorList>
            <person name="Theologis A."/>
            <person name="Ecker J.R."/>
            <person name="Palm C.J."/>
            <person name="Federspiel N.A."/>
            <person name="Kaul S."/>
            <person name="White O."/>
            <person name="Alonso J."/>
            <person name="Altafi H."/>
            <person name="Araujo R."/>
            <person name="Bowman C.L."/>
            <person name="Brooks S.Y."/>
            <person name="Buehler E."/>
            <person name="Chan A."/>
            <person name="Chao Q."/>
            <person name="Chen H."/>
            <person name="Cheuk R.F."/>
            <person name="Chin C.W."/>
            <person name="Chung M.K."/>
            <person name="Conn L."/>
            <person name="Conway A.B."/>
            <person name="Conway A.R."/>
            <person name="Creasy T.H."/>
            <person name="Dewar K."/>
            <person name="Dunn P."/>
            <person name="Etgu P."/>
            <person name="Feldblyum T.V."/>
            <person name="Feng J.-D."/>
            <person name="Fong B."/>
            <person name="Fujii C.Y."/>
            <person name="Gill J.E."/>
            <person name="Goldsmith A.D."/>
            <person name="Haas B."/>
            <person name="Hansen N.F."/>
            <person name="Hughes B."/>
            <person name="Huizar L."/>
            <person name="Hunter J.L."/>
            <person name="Jenkins J."/>
            <person name="Johnson-Hopson C."/>
            <person name="Khan S."/>
            <person name="Khaykin E."/>
            <person name="Kim C.J."/>
            <person name="Koo H.L."/>
            <person name="Kremenetskaia I."/>
            <person name="Kurtz D.B."/>
            <person name="Kwan A."/>
            <person name="Lam B."/>
            <person name="Langin-Hooper S."/>
            <person name="Lee A."/>
            <person name="Lee J.M."/>
            <person name="Lenz C.A."/>
            <person name="Li J.H."/>
            <person name="Li Y.-P."/>
            <person name="Lin X."/>
            <person name="Liu S.X."/>
            <person name="Liu Z.A."/>
            <person name="Luros J.S."/>
            <person name="Maiti R."/>
            <person name="Marziali A."/>
            <person name="Militscher J."/>
            <person name="Miranda M."/>
            <person name="Nguyen M."/>
            <person name="Nierman W.C."/>
            <person name="Osborne B.I."/>
            <person name="Pai G."/>
            <person name="Peterson J."/>
            <person name="Pham P.K."/>
            <person name="Rizzo M."/>
            <person name="Rooney T."/>
            <person name="Rowley D."/>
            <person name="Sakano H."/>
            <person name="Salzberg S.L."/>
            <person name="Schwartz J.R."/>
            <person name="Shinn P."/>
            <person name="Southwick A.M."/>
            <person name="Sun H."/>
            <person name="Tallon L.J."/>
            <person name="Tambunga G."/>
            <person name="Toriumi M.J."/>
            <person name="Town C.D."/>
            <person name="Utterback T."/>
            <person name="Van Aken S."/>
            <person name="Vaysberg M."/>
            <person name="Vysotskaia V.S."/>
            <person name="Walker M."/>
            <person name="Wu D."/>
            <person name="Yu G."/>
            <person name="Fraser C.M."/>
            <person name="Venter J.C."/>
            <person name="Davis R.W."/>
        </authorList>
    </citation>
    <scope>NUCLEOTIDE SEQUENCE [LARGE SCALE GENOMIC DNA]</scope>
    <source>
        <strain>cv. Columbia</strain>
    </source>
</reference>
<reference key="2">
    <citation type="journal article" date="2017" name="Plant J.">
        <title>Araport11: a complete reannotation of the Arabidopsis thaliana reference genome.</title>
        <authorList>
            <person name="Cheng C.Y."/>
            <person name="Krishnakumar V."/>
            <person name="Chan A.P."/>
            <person name="Thibaud-Nissen F."/>
            <person name="Schobel S."/>
            <person name="Town C.D."/>
        </authorList>
    </citation>
    <scope>GENOME REANNOTATION</scope>
    <source>
        <strain>cv. Columbia</strain>
    </source>
</reference>
<reference key="3">
    <citation type="journal article" date="2004" name="Plant Cell">
        <title>Genome-wide analysis of Arabidopsis pentatricopeptide repeat proteins reveals their essential role in organelle biogenesis.</title>
        <authorList>
            <person name="Lurin C."/>
            <person name="Andres C."/>
            <person name="Aubourg S."/>
            <person name="Bellaoui M."/>
            <person name="Bitton F."/>
            <person name="Bruyere C."/>
            <person name="Caboche M."/>
            <person name="Debast C."/>
            <person name="Gualberto J."/>
            <person name="Hoffmann B."/>
            <person name="Lecharny A."/>
            <person name="Le Ret M."/>
            <person name="Martin-Magniette M.-L."/>
            <person name="Mireau H."/>
            <person name="Peeters N."/>
            <person name="Renou J.-P."/>
            <person name="Szurek B."/>
            <person name="Taconnat L."/>
            <person name="Small I."/>
        </authorList>
    </citation>
    <scope>GENE FAMILY</scope>
</reference>
<reference key="4">
    <citation type="journal article" date="2015" name="J. Exp. Bot.">
        <title>Identification of cleavage sites and substrate proteins for two mitochondrial intermediate peptidases in Arabidopsis thaliana.</title>
        <authorList>
            <person name="Carrie C."/>
            <person name="Venne A.S."/>
            <person name="Zahedi R.P."/>
            <person name="Soll J."/>
        </authorList>
    </citation>
    <scope>IDENTIFICATION BY MASS SPECTROMETRY</scope>
    <scope>CLEAVAGE OF TRANSIT PEPTIDE AFTER TYR-12</scope>
</reference>
<organism>
    <name type="scientific">Arabidopsis thaliana</name>
    <name type="common">Mouse-ear cress</name>
    <dbReference type="NCBI Taxonomy" id="3702"/>
    <lineage>
        <taxon>Eukaryota</taxon>
        <taxon>Viridiplantae</taxon>
        <taxon>Streptophyta</taxon>
        <taxon>Embryophyta</taxon>
        <taxon>Tracheophyta</taxon>
        <taxon>Spermatophyta</taxon>
        <taxon>Magnoliopsida</taxon>
        <taxon>eudicotyledons</taxon>
        <taxon>Gunneridae</taxon>
        <taxon>Pentapetalae</taxon>
        <taxon>rosids</taxon>
        <taxon>malvids</taxon>
        <taxon>Brassicales</taxon>
        <taxon>Brassicaceae</taxon>
        <taxon>Camelineae</taxon>
        <taxon>Arabidopsis</taxon>
    </lineage>
</organism>
<accession>Q9FXB9</accession>
<protein>
    <recommendedName>
        <fullName>Pentatricopeptide repeat-containing protein At1g56690, mitochondrial</fullName>
    </recommendedName>
</protein>
<sequence>MKRLKLILRRTYLTSTGVNCSFEISRLSRIGKINEARKFFDSLQFKAIGSWNSIVSGYFSNGLPKEARQLFDEMSERNVVSWNGLVSGYIKNRMIVEARNVFELMPERNVVSWTAMVKGYMQEGMVGEAESLFWRMPERNEVSWTVMFGGLIDDGRIDKARKLYDMMPVKDVVASTNMIGGLCREGRVDEARLIFDEMRERNVVTWTTMITGYRQNNRVDVARKLFEVMPEKTEVSWTSMLLGYTLSGRIEDAEEFFEVMPMKPVIACNAMIVGFGEVGEISKARRVFDLMEDRDNATWRGMIKAYERKGFELEALDLFAQMQKQGVRPSFPSLISILSVCATLASLQYGRQVHAHLVRCQFDDDVYVASVLMTMYVKCGELVKAKLVFDRFSSKDIIMWNSIISGYASHGLGEEALKIFHEMPSSGTMPNKVTLIAILTACSYAGKLEEGLEIFESMESKFCVTPTVEHYSCTVDMLGRAGQVDKAMELIESMTIKPDATVWGALLGACKTHSRLDLAEVAAKKLFENEPDNAGTYVLLSSINASRSKWGDVAVVRKNMRTNNVSKFPGCSWIEVGKKVHMFTRGGIKNHPEQAMILMMLEKTDGLLREAGYSPDCSHVLHDVDEEEKVDSLSRHSERLAVAYGLLKLPEGVPIRVMKNLRVCGDCHAAIKLISKVTEREIILRDANRFHHFNNGECSCRDYW</sequence>